<accession>Q0K8N9</accession>
<gene>
    <name evidence="1" type="primary">efp</name>
    <name type="ordered locus">H16_A2549</name>
</gene>
<reference key="1">
    <citation type="journal article" date="2006" name="Nat. Biotechnol.">
        <title>Genome sequence of the bioplastic-producing 'Knallgas' bacterium Ralstonia eutropha H16.</title>
        <authorList>
            <person name="Pohlmann A."/>
            <person name="Fricke W.F."/>
            <person name="Reinecke F."/>
            <person name="Kusian B."/>
            <person name="Liesegang H."/>
            <person name="Cramm R."/>
            <person name="Eitinger T."/>
            <person name="Ewering C."/>
            <person name="Poetter M."/>
            <person name="Schwartz E."/>
            <person name="Strittmatter A."/>
            <person name="Voss I."/>
            <person name="Gottschalk G."/>
            <person name="Steinbuechel A."/>
            <person name="Friedrich B."/>
            <person name="Bowien B."/>
        </authorList>
    </citation>
    <scope>NUCLEOTIDE SEQUENCE [LARGE SCALE GENOMIC DNA]</scope>
    <source>
        <strain>ATCC 17699 / DSM 428 / KCTC 22496 / NCIMB 10442 / H16 / Stanier 337</strain>
    </source>
</reference>
<sequence>MKIAQELRVGNVFMIGGDPMVVQKAEYNKSGRNAAVVKMKYKNLLTDAPGESVFKADDKFEVVVLERRECTYSYFADPMYVFMDADYNQYEVEKDSMGDSLNYLEDGMNVEVVFYNDKAISVEMPTTLVREIVYTEPAVKGDTSSGKVLKGAKINTGFELQVPLFCNIGDKIEIDTRTGEYRSRAN</sequence>
<name>EFP_CUPNH</name>
<dbReference type="EMBL" id="AM260479">
    <property type="protein sequence ID" value="CAJ93632.1"/>
    <property type="molecule type" value="Genomic_DNA"/>
</dbReference>
<dbReference type="RefSeq" id="WP_010814696.1">
    <property type="nucleotide sequence ID" value="NZ_CP039287.1"/>
</dbReference>
<dbReference type="SMR" id="Q0K8N9"/>
<dbReference type="STRING" id="381666.H16_A2549"/>
<dbReference type="GeneID" id="29762169"/>
<dbReference type="KEGG" id="reh:H16_A2549"/>
<dbReference type="eggNOG" id="COG0231">
    <property type="taxonomic scope" value="Bacteria"/>
</dbReference>
<dbReference type="HOGENOM" id="CLU_074944_2_1_4"/>
<dbReference type="OrthoDB" id="9801844at2"/>
<dbReference type="UniPathway" id="UPA00345"/>
<dbReference type="Proteomes" id="UP000008210">
    <property type="component" value="Chromosome 1"/>
</dbReference>
<dbReference type="GO" id="GO:0005737">
    <property type="term" value="C:cytoplasm"/>
    <property type="evidence" value="ECO:0007669"/>
    <property type="project" value="UniProtKB-SubCell"/>
</dbReference>
<dbReference type="GO" id="GO:0003746">
    <property type="term" value="F:translation elongation factor activity"/>
    <property type="evidence" value="ECO:0007669"/>
    <property type="project" value="UniProtKB-UniRule"/>
</dbReference>
<dbReference type="GO" id="GO:0043043">
    <property type="term" value="P:peptide biosynthetic process"/>
    <property type="evidence" value="ECO:0007669"/>
    <property type="project" value="InterPro"/>
</dbReference>
<dbReference type="CDD" id="cd04470">
    <property type="entry name" value="S1_EF-P_repeat_1"/>
    <property type="match status" value="1"/>
</dbReference>
<dbReference type="CDD" id="cd05794">
    <property type="entry name" value="S1_EF-P_repeat_2"/>
    <property type="match status" value="1"/>
</dbReference>
<dbReference type="FunFam" id="2.30.30.30:FF:000003">
    <property type="entry name" value="Elongation factor P"/>
    <property type="match status" value="1"/>
</dbReference>
<dbReference type="FunFam" id="2.40.50.140:FF:000004">
    <property type="entry name" value="Elongation factor P"/>
    <property type="match status" value="1"/>
</dbReference>
<dbReference type="FunFam" id="2.40.50.140:FF:000009">
    <property type="entry name" value="Elongation factor P"/>
    <property type="match status" value="1"/>
</dbReference>
<dbReference type="Gene3D" id="2.30.30.30">
    <property type="match status" value="1"/>
</dbReference>
<dbReference type="Gene3D" id="2.40.50.140">
    <property type="entry name" value="Nucleic acid-binding proteins"/>
    <property type="match status" value="2"/>
</dbReference>
<dbReference type="HAMAP" id="MF_00141">
    <property type="entry name" value="EF_P"/>
    <property type="match status" value="1"/>
</dbReference>
<dbReference type="InterPro" id="IPR015365">
    <property type="entry name" value="Elong-fact-P_C"/>
</dbReference>
<dbReference type="InterPro" id="IPR012340">
    <property type="entry name" value="NA-bd_OB-fold"/>
</dbReference>
<dbReference type="InterPro" id="IPR014722">
    <property type="entry name" value="Rib_uL2_dom2"/>
</dbReference>
<dbReference type="InterPro" id="IPR020599">
    <property type="entry name" value="Transl_elong_fac_P/YeiP"/>
</dbReference>
<dbReference type="InterPro" id="IPR013185">
    <property type="entry name" value="Transl_elong_KOW-like"/>
</dbReference>
<dbReference type="InterPro" id="IPR001059">
    <property type="entry name" value="Transl_elong_P/YeiP_cen"/>
</dbReference>
<dbReference type="InterPro" id="IPR013852">
    <property type="entry name" value="Transl_elong_P/YeiP_CS"/>
</dbReference>
<dbReference type="InterPro" id="IPR011768">
    <property type="entry name" value="Transl_elongation_fac_P"/>
</dbReference>
<dbReference type="InterPro" id="IPR008991">
    <property type="entry name" value="Translation_prot_SH3-like_sf"/>
</dbReference>
<dbReference type="NCBIfam" id="TIGR00038">
    <property type="entry name" value="efp"/>
    <property type="match status" value="1"/>
</dbReference>
<dbReference type="NCBIfam" id="NF001810">
    <property type="entry name" value="PRK00529.1"/>
    <property type="match status" value="1"/>
</dbReference>
<dbReference type="PANTHER" id="PTHR30053">
    <property type="entry name" value="ELONGATION FACTOR P"/>
    <property type="match status" value="1"/>
</dbReference>
<dbReference type="PANTHER" id="PTHR30053:SF12">
    <property type="entry name" value="ELONGATION FACTOR P (EF-P) FAMILY PROTEIN"/>
    <property type="match status" value="1"/>
</dbReference>
<dbReference type="Pfam" id="PF01132">
    <property type="entry name" value="EFP"/>
    <property type="match status" value="1"/>
</dbReference>
<dbReference type="Pfam" id="PF08207">
    <property type="entry name" value="EFP_N"/>
    <property type="match status" value="1"/>
</dbReference>
<dbReference type="Pfam" id="PF09285">
    <property type="entry name" value="Elong-fact-P_C"/>
    <property type="match status" value="1"/>
</dbReference>
<dbReference type="PIRSF" id="PIRSF005901">
    <property type="entry name" value="EF-P"/>
    <property type="match status" value="1"/>
</dbReference>
<dbReference type="SMART" id="SM01185">
    <property type="entry name" value="EFP"/>
    <property type="match status" value="1"/>
</dbReference>
<dbReference type="SMART" id="SM00841">
    <property type="entry name" value="Elong-fact-P_C"/>
    <property type="match status" value="1"/>
</dbReference>
<dbReference type="SUPFAM" id="SSF50249">
    <property type="entry name" value="Nucleic acid-binding proteins"/>
    <property type="match status" value="2"/>
</dbReference>
<dbReference type="SUPFAM" id="SSF50104">
    <property type="entry name" value="Translation proteins SH3-like domain"/>
    <property type="match status" value="1"/>
</dbReference>
<dbReference type="PROSITE" id="PS01275">
    <property type="entry name" value="EFP"/>
    <property type="match status" value="1"/>
</dbReference>
<protein>
    <recommendedName>
        <fullName evidence="1">Elongation factor P</fullName>
        <shortName evidence="1">EF-P</shortName>
    </recommendedName>
</protein>
<keyword id="KW-0963">Cytoplasm</keyword>
<keyword id="KW-0251">Elongation factor</keyword>
<keyword id="KW-0648">Protein biosynthesis</keyword>
<keyword id="KW-1185">Reference proteome</keyword>
<organism>
    <name type="scientific">Cupriavidus necator (strain ATCC 17699 / DSM 428 / KCTC 22496 / NCIMB 10442 / H16 / Stanier 337)</name>
    <name type="common">Ralstonia eutropha</name>
    <dbReference type="NCBI Taxonomy" id="381666"/>
    <lineage>
        <taxon>Bacteria</taxon>
        <taxon>Pseudomonadati</taxon>
        <taxon>Pseudomonadota</taxon>
        <taxon>Betaproteobacteria</taxon>
        <taxon>Burkholderiales</taxon>
        <taxon>Burkholderiaceae</taxon>
        <taxon>Cupriavidus</taxon>
    </lineage>
</organism>
<evidence type="ECO:0000255" key="1">
    <source>
        <dbReference type="HAMAP-Rule" id="MF_00141"/>
    </source>
</evidence>
<proteinExistence type="inferred from homology"/>
<feature type="chain" id="PRO_1000010823" description="Elongation factor P">
    <location>
        <begin position="1"/>
        <end position="186"/>
    </location>
</feature>
<comment type="function">
    <text evidence="1">Involved in peptide bond synthesis. Stimulates efficient translation and peptide-bond synthesis on native or reconstituted 70S ribosomes in vitro. Probably functions indirectly by altering the affinity of the ribosome for aminoacyl-tRNA, thus increasing their reactivity as acceptors for peptidyl transferase.</text>
</comment>
<comment type="pathway">
    <text evidence="1">Protein biosynthesis; polypeptide chain elongation.</text>
</comment>
<comment type="subcellular location">
    <subcellularLocation>
        <location evidence="1">Cytoplasm</location>
    </subcellularLocation>
</comment>
<comment type="similarity">
    <text evidence="1">Belongs to the elongation factor P family.</text>
</comment>